<evidence type="ECO:0000250" key="1">
    <source>
        <dbReference type="UniProtKB" id="Q9NPD3"/>
    </source>
</evidence>
<evidence type="ECO:0000305" key="2"/>
<gene>
    <name type="primary">EXOSC4</name>
    <name type="synonym">RRP41</name>
</gene>
<feature type="initiator methionine" description="Removed" evidence="1">
    <location>
        <position position="1"/>
    </location>
</feature>
<feature type="chain" id="PRO_0000259642" description="Exosome complex component RRP41">
    <location>
        <begin position="2"/>
        <end position="245"/>
    </location>
</feature>
<feature type="modified residue" description="N-acetylalanine" evidence="1">
    <location>
        <position position="2"/>
    </location>
</feature>
<feature type="sequence conflict" description="In Ref. 2; AAI09820." evidence="2" ref="2">
    <original>A</original>
    <variation>P</variation>
    <location>
        <position position="70"/>
    </location>
</feature>
<reference key="1">
    <citation type="journal article" date="2004" name="Genomics">
        <title>Assessment of the gene content of the chromosomal regions flanking bovine DGAT1.</title>
        <authorList>
            <person name="Winter A."/>
            <person name="Alzinger A."/>
            <person name="Fries R."/>
        </authorList>
    </citation>
    <scope>NUCLEOTIDE SEQUENCE [GENOMIC DNA]</scope>
</reference>
<reference key="2">
    <citation type="submission" date="2005-11" db="EMBL/GenBank/DDBJ databases">
        <authorList>
            <consortium name="NIH - Mammalian Gene Collection (MGC) project"/>
        </authorList>
    </citation>
    <scope>NUCLEOTIDE SEQUENCE [LARGE SCALE MRNA]</scope>
    <source>
        <strain>Crossbred X Angus</strain>
        <tissue>Liver</tissue>
    </source>
</reference>
<sequence>MAGLELLSDQGYRVDGRRAGELRKIQARMGVFAQADGSAYIEQGNTKALAVVYGPHEIRGSRARALPDRALVNCQYSSATFSTGERKRRPHGDRKSCEMGLQLRQTFEAAILTQLHPRSQIDIYVQVLQADGGTYAACVNAATLAVLDAGIPMRDFVCACSAGFVDGTALADLSHVEEAAGGPQLALALLPASGQIALLEMDARLHEDHLEQVLEAAARASRDVHTVLDRVVRQHVQEASVLLGD</sequence>
<dbReference type="EMBL" id="AJ518955">
    <property type="protein sequence ID" value="CAD58792.1"/>
    <property type="molecule type" value="Genomic_DNA"/>
</dbReference>
<dbReference type="EMBL" id="BC109819">
    <property type="protein sequence ID" value="AAI09820.1"/>
    <property type="molecule type" value="mRNA"/>
</dbReference>
<dbReference type="RefSeq" id="NP_001071554.1">
    <property type="nucleotide sequence ID" value="NM_001078086.2"/>
</dbReference>
<dbReference type="SMR" id="Q7YRA3"/>
<dbReference type="FunCoup" id="Q7YRA3">
    <property type="interactions" value="2463"/>
</dbReference>
<dbReference type="STRING" id="9913.ENSBTAP00000019451"/>
<dbReference type="PaxDb" id="9913-ENSBTAP00000019451"/>
<dbReference type="Ensembl" id="ENSBTAT00000019451.4">
    <property type="protein sequence ID" value="ENSBTAP00000019451.3"/>
    <property type="gene ID" value="ENSBTAG00000014607.4"/>
</dbReference>
<dbReference type="GeneID" id="618292"/>
<dbReference type="KEGG" id="bta:618292"/>
<dbReference type="CTD" id="54512"/>
<dbReference type="VEuPathDB" id="HostDB:ENSBTAG00000014607"/>
<dbReference type="VGNC" id="VGNC:28659">
    <property type="gene designation" value="EXOSC4"/>
</dbReference>
<dbReference type="eggNOG" id="KOG1068">
    <property type="taxonomic scope" value="Eukaryota"/>
</dbReference>
<dbReference type="GeneTree" id="ENSGT00940000153348"/>
<dbReference type="HOGENOM" id="CLU_063514_0_0_1"/>
<dbReference type="InParanoid" id="Q7YRA3"/>
<dbReference type="OMA" id="ECRINTH"/>
<dbReference type="OrthoDB" id="27298at2759"/>
<dbReference type="TreeFam" id="TF313915"/>
<dbReference type="Reactome" id="R-BTA-429958">
    <property type="pathway name" value="mRNA decay by 3' to 5' exoribonuclease"/>
</dbReference>
<dbReference type="Reactome" id="R-BTA-450385">
    <property type="pathway name" value="Butyrate Response Factor 1 (BRF1) binds and destabilizes mRNA"/>
</dbReference>
<dbReference type="Reactome" id="R-BTA-450513">
    <property type="pathway name" value="Tristetraprolin (TTP, ZFP36) binds and destabilizes mRNA"/>
</dbReference>
<dbReference type="Reactome" id="R-BTA-450604">
    <property type="pathway name" value="KSRP (KHSRP) binds and destabilizes mRNA"/>
</dbReference>
<dbReference type="Reactome" id="R-BTA-6791226">
    <property type="pathway name" value="Major pathway of rRNA processing in the nucleolus and cytosol"/>
</dbReference>
<dbReference type="CD-CODE" id="D7FE2080">
    <property type="entry name" value="Nucleolus"/>
</dbReference>
<dbReference type="Proteomes" id="UP000009136">
    <property type="component" value="Chromosome 14"/>
</dbReference>
<dbReference type="Bgee" id="ENSBTAG00000014607">
    <property type="expression patterns" value="Expressed in oocyte and 109 other cell types or tissues"/>
</dbReference>
<dbReference type="GO" id="GO:0000177">
    <property type="term" value="C:cytoplasmic exosome (RNase complex)"/>
    <property type="evidence" value="ECO:0000318"/>
    <property type="project" value="GO_Central"/>
</dbReference>
<dbReference type="GO" id="GO:0005829">
    <property type="term" value="C:cytosol"/>
    <property type="evidence" value="ECO:0007669"/>
    <property type="project" value="Ensembl"/>
</dbReference>
<dbReference type="GO" id="GO:0000791">
    <property type="term" value="C:euchromatin"/>
    <property type="evidence" value="ECO:0007669"/>
    <property type="project" value="Ensembl"/>
</dbReference>
<dbReference type="GO" id="GO:0000178">
    <property type="term" value="C:exosome (RNase complex)"/>
    <property type="evidence" value="ECO:0000250"/>
    <property type="project" value="UniProtKB"/>
</dbReference>
<dbReference type="GO" id="GO:0000176">
    <property type="term" value="C:nuclear exosome (RNase complex)"/>
    <property type="evidence" value="ECO:0000318"/>
    <property type="project" value="GO_Central"/>
</dbReference>
<dbReference type="GO" id="GO:0005730">
    <property type="term" value="C:nucleolus"/>
    <property type="evidence" value="ECO:0000318"/>
    <property type="project" value="GO_Central"/>
</dbReference>
<dbReference type="GO" id="GO:0005654">
    <property type="term" value="C:nucleoplasm"/>
    <property type="evidence" value="ECO:0007669"/>
    <property type="project" value="UniProtKB-SubCell"/>
</dbReference>
<dbReference type="GO" id="GO:0004527">
    <property type="term" value="F:exonuclease activity"/>
    <property type="evidence" value="ECO:0007669"/>
    <property type="project" value="UniProtKB-KW"/>
</dbReference>
<dbReference type="GO" id="GO:0035925">
    <property type="term" value="F:mRNA 3'-UTR AU-rich region binding"/>
    <property type="evidence" value="ECO:0007669"/>
    <property type="project" value="Ensembl"/>
</dbReference>
<dbReference type="GO" id="GO:0003723">
    <property type="term" value="F:RNA binding"/>
    <property type="evidence" value="ECO:0000318"/>
    <property type="project" value="GO_Central"/>
</dbReference>
<dbReference type="GO" id="GO:0051607">
    <property type="term" value="P:defense response to virus"/>
    <property type="evidence" value="ECO:0007669"/>
    <property type="project" value="Ensembl"/>
</dbReference>
<dbReference type="GO" id="GO:0045006">
    <property type="term" value="P:DNA deamination"/>
    <property type="evidence" value="ECO:0007669"/>
    <property type="project" value="Ensembl"/>
</dbReference>
<dbReference type="GO" id="GO:0071044">
    <property type="term" value="P:histone mRNA catabolic process"/>
    <property type="evidence" value="ECO:0000250"/>
    <property type="project" value="UniProtKB"/>
</dbReference>
<dbReference type="GO" id="GO:0000460">
    <property type="term" value="P:maturation of 5.8S rRNA"/>
    <property type="evidence" value="ECO:0007669"/>
    <property type="project" value="Ensembl"/>
</dbReference>
<dbReference type="GO" id="GO:0071028">
    <property type="term" value="P:nuclear mRNA surveillance"/>
    <property type="evidence" value="ECO:0000318"/>
    <property type="project" value="GO_Central"/>
</dbReference>
<dbReference type="GO" id="GO:0071051">
    <property type="term" value="P:poly(A)-dependent snoRNA 3'-end processing"/>
    <property type="evidence" value="ECO:0000318"/>
    <property type="project" value="GO_Central"/>
</dbReference>
<dbReference type="GO" id="GO:0030307">
    <property type="term" value="P:positive regulation of cell growth"/>
    <property type="evidence" value="ECO:0007669"/>
    <property type="project" value="Ensembl"/>
</dbReference>
<dbReference type="GO" id="GO:0016075">
    <property type="term" value="P:rRNA catabolic process"/>
    <property type="evidence" value="ECO:0000318"/>
    <property type="project" value="GO_Central"/>
</dbReference>
<dbReference type="GO" id="GO:0034475">
    <property type="term" value="P:U4 snRNA 3'-end processing"/>
    <property type="evidence" value="ECO:0000318"/>
    <property type="project" value="GO_Central"/>
</dbReference>
<dbReference type="CDD" id="cd11370">
    <property type="entry name" value="RNase_PH_RRP41"/>
    <property type="match status" value="1"/>
</dbReference>
<dbReference type="FunFam" id="3.30.230.70:FF:000010">
    <property type="entry name" value="Exosome complex component RRP41"/>
    <property type="match status" value="1"/>
</dbReference>
<dbReference type="Gene3D" id="3.30.230.70">
    <property type="entry name" value="GHMP Kinase, N-terminal domain"/>
    <property type="match status" value="1"/>
</dbReference>
<dbReference type="InterPro" id="IPR001247">
    <property type="entry name" value="ExoRNase_PH_dom1"/>
</dbReference>
<dbReference type="InterPro" id="IPR015847">
    <property type="entry name" value="ExoRNase_PH_dom2"/>
</dbReference>
<dbReference type="InterPro" id="IPR036345">
    <property type="entry name" value="ExoRNase_PH_dom2_sf"/>
</dbReference>
<dbReference type="InterPro" id="IPR027408">
    <property type="entry name" value="PNPase/RNase_PH_dom_sf"/>
</dbReference>
<dbReference type="InterPro" id="IPR020568">
    <property type="entry name" value="Ribosomal_Su5_D2-typ_SF"/>
</dbReference>
<dbReference type="InterPro" id="IPR050080">
    <property type="entry name" value="RNase_PH"/>
</dbReference>
<dbReference type="PANTHER" id="PTHR11953">
    <property type="entry name" value="EXOSOME COMPLEX COMPONENT"/>
    <property type="match status" value="1"/>
</dbReference>
<dbReference type="PANTHER" id="PTHR11953:SF0">
    <property type="entry name" value="EXOSOME COMPLEX COMPONENT RRP41"/>
    <property type="match status" value="1"/>
</dbReference>
<dbReference type="Pfam" id="PF01138">
    <property type="entry name" value="RNase_PH"/>
    <property type="match status" value="1"/>
</dbReference>
<dbReference type="Pfam" id="PF03725">
    <property type="entry name" value="RNase_PH_C"/>
    <property type="match status" value="1"/>
</dbReference>
<dbReference type="SUPFAM" id="SSF55666">
    <property type="entry name" value="Ribonuclease PH domain 2-like"/>
    <property type="match status" value="1"/>
</dbReference>
<dbReference type="SUPFAM" id="SSF54211">
    <property type="entry name" value="Ribosomal protein S5 domain 2-like"/>
    <property type="match status" value="1"/>
</dbReference>
<comment type="function">
    <text evidence="1">Non-catalytic component of the RNA exosome complex which has 3'-&gt;5' exoribonuclease activity and participates in a multitude of cellular RNA processing and degradation events. In the nucleus, the RNA exosome complex is involved in proper maturation of stable RNA species such as rRNA, snRNA and snoRNA, in the elimination of RNA processing by-products and non-coding 'pervasive' transcripts, such as antisense RNA species and promoter-upstream transcripts (PROMPTs), and of mRNAs with processing defects, thereby limiting or excluding their export to the cytoplasm. The RNA exosome may be involved in Ig class switch recombination (CSR) and/or Ig variable region somatic hypermutation (SHM) by targeting AICDA deamination activity to transcribed dsDNA substrates. In the cytoplasm, the RNA exosome complex is involved in general mRNA turnover and specifically degrades inherently unstable mRNAs containing AU-rich elements (AREs) within their 3' untranslated regions, and in RNA surveillance pathways, preventing translation of aberrant mRNAs. It seems to be involved in degradation of histone mRNA. The catalytic inactive RNA exosome core complex of 9 subunits (Exo-9) is proposed to play a pivotal role in the binding and presentation of RNA for ribonucleolysis, and to serve as a scaffold for the association with catalytic subunits and accessory proteins or complexes. EXOSC4 binds to ARE-containing RNAs (By similarity).</text>
</comment>
<comment type="subunit">
    <text evidence="1">Component of the RNA exosome core complex (Exo-9), composed of EXOSC1, EXOSC2, EXOSC3, EXOSC4, EXOSC5, EXOSC6, EXOSC7, EXOSC8 and EXOSC9; within the complex interacts with EXOSC2, EXOSC7 and EXOSC9 (By similarity). The catalytically inactive RNA exosome core complex (Exo-9) associates with the catalytic subunit EXOSC10/RRP6 (By similarity). Exo-9 may associate with DIS3 to form the nucleolar exosome complex, or DIS3L to form the cytoplasmic exosome complex (By similarity). Exo-9 is formed by a hexameric base ring consisting of the heterodimers EXOSC4-EXOSC9, EXOSC5-EXOSC8 and EXOSC6-EXOSC7, and a cap ring consisting of EXOSC1, EXOSC2 and EXOSC3 (By similarity). The RNA exosome complex associates with cofactors C1D/RRP47, MPHOSPH6/MPP6 and MTREX/MTR4 (By similarity). Interacts with DDX60 (By similarity). Interacts with DIS3; the interaction is direct (By similarity).</text>
</comment>
<comment type="subcellular location">
    <subcellularLocation>
        <location evidence="1">Cytoplasm</location>
    </subcellularLocation>
    <subcellularLocation>
        <location evidence="1">Nucleus</location>
        <location evidence="1">Nucleolus</location>
    </subcellularLocation>
    <subcellularLocation>
        <location evidence="1">Nucleus</location>
    </subcellularLocation>
    <subcellularLocation>
        <location evidence="1">Nucleus</location>
        <location evidence="1">Nucleoplasm</location>
    </subcellularLocation>
</comment>
<comment type="similarity">
    <text evidence="2">Belongs to the RNase PH family.</text>
</comment>
<proteinExistence type="evidence at transcript level"/>
<organism>
    <name type="scientific">Bos taurus</name>
    <name type="common">Bovine</name>
    <dbReference type="NCBI Taxonomy" id="9913"/>
    <lineage>
        <taxon>Eukaryota</taxon>
        <taxon>Metazoa</taxon>
        <taxon>Chordata</taxon>
        <taxon>Craniata</taxon>
        <taxon>Vertebrata</taxon>
        <taxon>Euteleostomi</taxon>
        <taxon>Mammalia</taxon>
        <taxon>Eutheria</taxon>
        <taxon>Laurasiatheria</taxon>
        <taxon>Artiodactyla</taxon>
        <taxon>Ruminantia</taxon>
        <taxon>Pecora</taxon>
        <taxon>Bovidae</taxon>
        <taxon>Bovinae</taxon>
        <taxon>Bos</taxon>
    </lineage>
</organism>
<accession>Q7YRA3</accession>
<accession>Q32L11</accession>
<name>EXOS4_BOVIN</name>
<protein>
    <recommendedName>
        <fullName>Exosome complex component RRP41</fullName>
    </recommendedName>
    <alternativeName>
        <fullName>Exosome component 4</fullName>
    </alternativeName>
    <alternativeName>
        <fullName>Ribosomal RNA-processing protein 41</fullName>
    </alternativeName>
</protein>
<keyword id="KW-0007">Acetylation</keyword>
<keyword id="KW-0963">Cytoplasm</keyword>
<keyword id="KW-0269">Exonuclease</keyword>
<keyword id="KW-0271">Exosome</keyword>
<keyword id="KW-0378">Hydrolase</keyword>
<keyword id="KW-0540">Nuclease</keyword>
<keyword id="KW-0539">Nucleus</keyword>
<keyword id="KW-1185">Reference proteome</keyword>
<keyword id="KW-0694">RNA-binding</keyword>
<keyword id="KW-0698">rRNA processing</keyword>